<dbReference type="EC" id="7.1.1.2"/>
<dbReference type="EMBL" id="Y18001">
    <property type="protein sequence ID" value="CAA77002.1"/>
    <property type="molecule type" value="Genomic_DNA"/>
</dbReference>
<dbReference type="PIR" id="T11514">
    <property type="entry name" value="T11514"/>
</dbReference>
<dbReference type="RefSeq" id="NP_008466.1">
    <property type="nucleotide sequence ID" value="NC_001992.1"/>
</dbReference>
<dbReference type="SMR" id="Q9ZXX6"/>
<dbReference type="GeneID" id="808321"/>
<dbReference type="CTD" id="4539"/>
<dbReference type="GO" id="GO:0005743">
    <property type="term" value="C:mitochondrial inner membrane"/>
    <property type="evidence" value="ECO:0000250"/>
    <property type="project" value="UniProtKB"/>
</dbReference>
<dbReference type="GO" id="GO:0045271">
    <property type="term" value="C:respiratory chain complex I"/>
    <property type="evidence" value="ECO:0000250"/>
    <property type="project" value="UniProtKB"/>
</dbReference>
<dbReference type="GO" id="GO:0008137">
    <property type="term" value="F:NADH dehydrogenase (ubiquinone) activity"/>
    <property type="evidence" value="ECO:0000250"/>
    <property type="project" value="UniProtKB"/>
</dbReference>
<dbReference type="GO" id="GO:0042773">
    <property type="term" value="P:ATP synthesis coupled electron transport"/>
    <property type="evidence" value="ECO:0007669"/>
    <property type="project" value="InterPro"/>
</dbReference>
<dbReference type="FunFam" id="1.10.287.3510:FF:000002">
    <property type="entry name" value="NADH-ubiquinone oxidoreductase chain 4L"/>
    <property type="match status" value="1"/>
</dbReference>
<dbReference type="Gene3D" id="1.10.287.3510">
    <property type="match status" value="1"/>
</dbReference>
<dbReference type="InterPro" id="IPR001133">
    <property type="entry name" value="NADH_UbQ_OxRdtase_chain4L/K"/>
</dbReference>
<dbReference type="InterPro" id="IPR039428">
    <property type="entry name" value="NUOK/Mnh_C1-like"/>
</dbReference>
<dbReference type="PANTHER" id="PTHR11434:SF0">
    <property type="entry name" value="NADH-UBIQUINONE OXIDOREDUCTASE CHAIN 4L"/>
    <property type="match status" value="1"/>
</dbReference>
<dbReference type="PANTHER" id="PTHR11434">
    <property type="entry name" value="NADH-UBIQUINONE OXIDOREDUCTASE SUBUNIT ND4L"/>
    <property type="match status" value="1"/>
</dbReference>
<dbReference type="Pfam" id="PF00420">
    <property type="entry name" value="Oxidored_q2"/>
    <property type="match status" value="1"/>
</dbReference>
<feature type="chain" id="PRO_0000118465" description="NADH-ubiquinone oxidoreductase chain 4L">
    <location>
        <begin position="1"/>
        <end position="98"/>
    </location>
</feature>
<feature type="transmembrane region" description="Helical" evidence="3">
    <location>
        <begin position="1"/>
        <end position="21"/>
    </location>
</feature>
<feature type="transmembrane region" description="Helical" evidence="3">
    <location>
        <begin position="26"/>
        <end position="46"/>
    </location>
</feature>
<feature type="transmembrane region" description="Helical" evidence="3">
    <location>
        <begin position="61"/>
        <end position="81"/>
    </location>
</feature>
<geneLocation type="mitochondrion"/>
<accession>Q9ZXX6</accession>
<name>NU4LM_PAPHA</name>
<keyword id="KW-0249">Electron transport</keyword>
<keyword id="KW-0472">Membrane</keyword>
<keyword id="KW-0496">Mitochondrion</keyword>
<keyword id="KW-0999">Mitochondrion inner membrane</keyword>
<keyword id="KW-0520">NAD</keyword>
<keyword id="KW-0679">Respiratory chain</keyword>
<keyword id="KW-1278">Translocase</keyword>
<keyword id="KW-0812">Transmembrane</keyword>
<keyword id="KW-1133">Transmembrane helix</keyword>
<keyword id="KW-0813">Transport</keyword>
<keyword id="KW-0830">Ubiquinone</keyword>
<sequence>MTPTHMNITLAFTISLLGMLIYRSHLMASLLCLEGMMMSLFIMTAVMASNAHSPLINIMPIIMLVFAACEAAVGLALLVSISNTYGLDHINNLSLLQC</sequence>
<protein>
    <recommendedName>
        <fullName>NADH-ubiquinone oxidoreductase chain 4L</fullName>
        <ecNumber>7.1.1.2</ecNumber>
    </recommendedName>
    <alternativeName>
        <fullName>NADH dehydrogenase subunit 4L</fullName>
    </alternativeName>
</protein>
<comment type="function">
    <text evidence="1">Core subunit of the mitochondrial membrane respiratory chain NADH dehydrogenase (Complex I) which catalyzes electron transfer from NADH through the respiratory chain, using ubiquinone as an electron acceptor. Part of the enzyme membrane arm which is embedded in the lipid bilayer and involved in proton translocation.</text>
</comment>
<comment type="catalytic activity">
    <reaction evidence="1">
        <text>a ubiquinone + NADH + 5 H(+)(in) = a ubiquinol + NAD(+) + 4 H(+)(out)</text>
        <dbReference type="Rhea" id="RHEA:29091"/>
        <dbReference type="Rhea" id="RHEA-COMP:9565"/>
        <dbReference type="Rhea" id="RHEA-COMP:9566"/>
        <dbReference type="ChEBI" id="CHEBI:15378"/>
        <dbReference type="ChEBI" id="CHEBI:16389"/>
        <dbReference type="ChEBI" id="CHEBI:17976"/>
        <dbReference type="ChEBI" id="CHEBI:57540"/>
        <dbReference type="ChEBI" id="CHEBI:57945"/>
        <dbReference type="EC" id="7.1.1.2"/>
    </reaction>
    <physiologicalReaction direction="left-to-right" evidence="1">
        <dbReference type="Rhea" id="RHEA:29092"/>
    </physiologicalReaction>
</comment>
<comment type="subunit">
    <text evidence="2">Core subunit of respiratory chain NADH dehydrogenase (Complex I) which is composed of 45 different subunits.</text>
</comment>
<comment type="subcellular location">
    <subcellularLocation>
        <location evidence="2">Mitochondrion inner membrane</location>
        <topology evidence="3">Multi-pass membrane protein</topology>
    </subcellularLocation>
</comment>
<comment type="similarity">
    <text evidence="4">Belongs to the complex I subunit 4L family.</text>
</comment>
<gene>
    <name type="primary">MT-ND4L</name>
    <name type="synonym">MTND4L</name>
    <name type="synonym">NADH4L</name>
    <name type="synonym">ND4L</name>
</gene>
<proteinExistence type="inferred from homology"/>
<evidence type="ECO:0000250" key="1">
    <source>
        <dbReference type="UniProtKB" id="P03901"/>
    </source>
</evidence>
<evidence type="ECO:0000250" key="2">
    <source>
        <dbReference type="UniProtKB" id="P03902"/>
    </source>
</evidence>
<evidence type="ECO:0000255" key="3"/>
<evidence type="ECO:0000305" key="4"/>
<reference key="1">
    <citation type="journal article" date="1998" name="J. Mol. Evol.">
        <title>Molecular timing of primate divergences as estimated by two nonprimate calibration points.</title>
        <authorList>
            <person name="Arnason U."/>
            <person name="Gullberg A."/>
            <person name="Janke A."/>
        </authorList>
    </citation>
    <scope>NUCLEOTIDE SEQUENCE [GENOMIC DNA]</scope>
</reference>
<organism>
    <name type="scientific">Papio hamadryas</name>
    <name type="common">Hamadryas baboon</name>
    <dbReference type="NCBI Taxonomy" id="9557"/>
    <lineage>
        <taxon>Eukaryota</taxon>
        <taxon>Metazoa</taxon>
        <taxon>Chordata</taxon>
        <taxon>Craniata</taxon>
        <taxon>Vertebrata</taxon>
        <taxon>Euteleostomi</taxon>
        <taxon>Mammalia</taxon>
        <taxon>Eutheria</taxon>
        <taxon>Euarchontoglires</taxon>
        <taxon>Primates</taxon>
        <taxon>Haplorrhini</taxon>
        <taxon>Catarrhini</taxon>
        <taxon>Cercopithecidae</taxon>
        <taxon>Cercopithecinae</taxon>
        <taxon>Papio</taxon>
    </lineage>
</organism>